<accession>P0C0Q9</accession>
<accession>P54112</accession>
<feature type="chain" id="PRO_0000145258" description="DNA gyrase subunit A">
    <location>
        <begin position="1"/>
        <end position="94" status="greater than"/>
    </location>
</feature>
<feature type="domain" description="Topo IIA-type catalytic" evidence="2">
    <location>
        <begin position="35"/>
        <end position="94"/>
    </location>
</feature>
<feature type="mutagenesis site" description="Resistant to ciprofloxacin." evidence="3">
    <original>S</original>
    <variation>F</variation>
    <location>
        <position position="84"/>
    </location>
</feature>
<feature type="non-terminal residue">
    <location>
        <position position="94"/>
    </location>
</feature>
<evidence type="ECO:0000255" key="1">
    <source>
        <dbReference type="HAMAP-Rule" id="MF_01897"/>
    </source>
</evidence>
<evidence type="ECO:0000255" key="2">
    <source>
        <dbReference type="PROSITE-ProRule" id="PRU01384"/>
    </source>
</evidence>
<evidence type="ECO:0000269" key="3">
    <source>
    </source>
</evidence>
<evidence type="ECO:0000305" key="4"/>
<gene>
    <name evidence="1" type="primary">gyrA</name>
</gene>
<proteinExistence type="evidence at protein level"/>
<reference key="1">
    <citation type="journal article" date="1991" name="Antimicrob. Agents Chemother.">
        <title>Ciprofloxacin resistance in coagulase-positive and -negative staphylococci: role of mutations at serine 84 in the DNA gyrase A protein of Staphylococcus aureus and Staphylococcus epidermidis.</title>
        <authorList>
            <person name="Sreedharan S."/>
            <person name="Peterson L.R."/>
            <person name="Fisher L.M."/>
        </authorList>
    </citation>
    <scope>NUCLEOTIDE SEQUENCE [GENOMIC DNA]</scope>
    <scope>MUTAGENESIS OF SER-84</scope>
</reference>
<keyword id="KW-0046">Antibiotic resistance</keyword>
<keyword id="KW-0067">ATP-binding</keyword>
<keyword id="KW-0963">Cytoplasm</keyword>
<keyword id="KW-0238">DNA-binding</keyword>
<keyword id="KW-0413">Isomerase</keyword>
<keyword id="KW-0547">Nucleotide-binding</keyword>
<keyword id="KW-0799">Topoisomerase</keyword>
<comment type="function">
    <text evidence="1">A type II topoisomerase that negatively supercoils closed circular double-stranded (ds) DNA in an ATP-dependent manner to modulate DNA topology and maintain chromosomes in an underwound state. Negative supercoiling favors strand separation, and DNA replication, transcription, recombination and repair, all of which involve strand separation. Also able to catalyze the interconversion of other topological isomers of dsDNA rings, including catenanes and knotted rings. Type II topoisomerases break and join 2 DNA strands simultaneously in an ATP-dependent manner.</text>
</comment>
<comment type="catalytic activity">
    <reaction evidence="1">
        <text>ATP-dependent breakage, passage and rejoining of double-stranded DNA.</text>
        <dbReference type="EC" id="5.6.2.2"/>
    </reaction>
</comment>
<comment type="subunit">
    <text evidence="1">Heterotetramer, composed of two GyrA and two GyrB chains. In the heterotetramer, GyrA contains the active site tyrosine that forms a transient covalent intermediate with DNA, while GyrB binds cofactors and catalyzes ATP hydrolysis.</text>
</comment>
<comment type="subcellular location">
    <subcellularLocation>
        <location evidence="1 4">Cytoplasm</location>
    </subcellularLocation>
</comment>
<comment type="miscellaneous">
    <text evidence="1">Few gyrases are as efficient as E.coli at forming negative supercoils. Not all organisms have 2 type II topoisomerases; in organisms with a single type II topoisomerase this enzyme also has to decatenate newly replicated chromosomes.</text>
</comment>
<comment type="similarity">
    <text evidence="1">Belongs to the type II topoisomerase GyrA/ParC subunit family.</text>
</comment>
<sequence>MAELPQSRINERNITSEMRESFLDYAMSVIVSRALPDVRDGLKPVHRRILYGLNEQGMTPDKPYKKSARIVGDVMGKYHPHGDSSIYEAMVRMA</sequence>
<protein>
    <recommendedName>
        <fullName evidence="1">DNA gyrase subunit A</fullName>
        <ecNumber evidence="1">5.6.2.2</ecNumber>
    </recommendedName>
</protein>
<organism>
    <name type="scientific">Staphylococcus epidermidis</name>
    <dbReference type="NCBI Taxonomy" id="1282"/>
    <lineage>
        <taxon>Bacteria</taxon>
        <taxon>Bacillati</taxon>
        <taxon>Bacillota</taxon>
        <taxon>Bacilli</taxon>
        <taxon>Bacillales</taxon>
        <taxon>Staphylococcaceae</taxon>
        <taxon>Staphylococcus</taxon>
    </lineage>
</organism>
<dbReference type="EC" id="5.6.2.2" evidence="1"/>
<dbReference type="EMBL" id="S72603">
    <property type="protein sequence ID" value="AAB20672.1"/>
    <property type="molecule type" value="Genomic_DNA"/>
</dbReference>
<dbReference type="PIR" id="A49832">
    <property type="entry name" value="A49832"/>
</dbReference>
<dbReference type="SMR" id="P0C0Q9"/>
<dbReference type="GO" id="GO:0005737">
    <property type="term" value="C:cytoplasm"/>
    <property type="evidence" value="ECO:0007669"/>
    <property type="project" value="UniProtKB-SubCell"/>
</dbReference>
<dbReference type="GO" id="GO:0009330">
    <property type="term" value="C:DNA topoisomerase type II (double strand cut, ATP-hydrolyzing) complex"/>
    <property type="evidence" value="ECO:0007669"/>
    <property type="project" value="TreeGrafter"/>
</dbReference>
<dbReference type="GO" id="GO:0005524">
    <property type="term" value="F:ATP binding"/>
    <property type="evidence" value="ECO:0007669"/>
    <property type="project" value="UniProtKB-KW"/>
</dbReference>
<dbReference type="GO" id="GO:0003677">
    <property type="term" value="F:DNA binding"/>
    <property type="evidence" value="ECO:0007669"/>
    <property type="project" value="UniProtKB-KW"/>
</dbReference>
<dbReference type="GO" id="GO:0034335">
    <property type="term" value="F:DNA negative supercoiling activity"/>
    <property type="evidence" value="ECO:0007669"/>
    <property type="project" value="UniProtKB-ARBA"/>
</dbReference>
<dbReference type="GO" id="GO:0006265">
    <property type="term" value="P:DNA topological change"/>
    <property type="evidence" value="ECO:0007669"/>
    <property type="project" value="InterPro"/>
</dbReference>
<dbReference type="GO" id="GO:0046677">
    <property type="term" value="P:response to antibiotic"/>
    <property type="evidence" value="ECO:0007669"/>
    <property type="project" value="UniProtKB-KW"/>
</dbReference>
<dbReference type="Gene3D" id="3.90.199.10">
    <property type="entry name" value="Topoisomerase II, domain 5"/>
    <property type="match status" value="1"/>
</dbReference>
<dbReference type="InterPro" id="IPR013760">
    <property type="entry name" value="Topo_IIA-like_dom_sf"/>
</dbReference>
<dbReference type="InterPro" id="IPR013758">
    <property type="entry name" value="Topo_IIA_A/C_ab"/>
</dbReference>
<dbReference type="InterPro" id="IPR002205">
    <property type="entry name" value="Topo_IIA_dom_A"/>
</dbReference>
<dbReference type="InterPro" id="IPR050220">
    <property type="entry name" value="Type_II_DNA_Topoisomerases"/>
</dbReference>
<dbReference type="PANTHER" id="PTHR43493:SF5">
    <property type="entry name" value="DNA GYRASE SUBUNIT A, CHLOROPLASTIC_MITOCHONDRIAL"/>
    <property type="match status" value="1"/>
</dbReference>
<dbReference type="PANTHER" id="PTHR43493">
    <property type="entry name" value="DNA GYRASE/TOPOISOMERASE SUBUNIT A"/>
    <property type="match status" value="1"/>
</dbReference>
<dbReference type="Pfam" id="PF00521">
    <property type="entry name" value="DNA_topoisoIV"/>
    <property type="match status" value="1"/>
</dbReference>
<dbReference type="SUPFAM" id="SSF56719">
    <property type="entry name" value="Type II DNA topoisomerase"/>
    <property type="match status" value="1"/>
</dbReference>
<dbReference type="PROSITE" id="PS52040">
    <property type="entry name" value="TOPO_IIA"/>
    <property type="match status" value="1"/>
</dbReference>
<name>GYRA_STAEP</name>